<sequence length="189" mass="17234">MSCCGCSGGCGSSCGGCGSNCCKPVCCCKPVCCCVPACSCSSCGDCKGGCGSCGGCKGGCGSCGGCKGGCGSCGGCKGGCGSCGGCGSCGGCKGGCSSCGGCGSCGGCKGGCGSCGGCGSCGGCGSCGCCQSSCCKPCCCQSSCCKPCCCQSSCCQSSCCKPCCCQSSCCKPCCCQSSCCAPVCCQCKI</sequence>
<evidence type="ECO:0000250" key="1">
    <source>
        <dbReference type="UniProtKB" id="Q701N4"/>
    </source>
</evidence>
<evidence type="ECO:0000255" key="2"/>
<evidence type="ECO:0000305" key="3"/>
<evidence type="ECO:0000312" key="4">
    <source>
        <dbReference type="EMBL" id="BAB29552.1"/>
    </source>
</evidence>
<evidence type="ECO:0000312" key="5">
    <source>
        <dbReference type="MGI" id="MGI:1918873"/>
    </source>
</evidence>
<gene>
    <name evidence="5" type="primary">Krtap5-2</name>
</gene>
<protein>
    <recommendedName>
        <fullName evidence="1">Keratin-associated protein 5-2</fullName>
    </recommendedName>
</protein>
<reference evidence="4" key="1">
    <citation type="journal article" date="2005" name="Science">
        <title>The transcriptional landscape of the mammalian genome.</title>
        <authorList>
            <person name="Carninci P."/>
            <person name="Kasukawa T."/>
            <person name="Katayama S."/>
            <person name="Gough J."/>
            <person name="Frith M.C."/>
            <person name="Maeda N."/>
            <person name="Oyama R."/>
            <person name="Ravasi T."/>
            <person name="Lenhard B."/>
            <person name="Wells C."/>
            <person name="Kodzius R."/>
            <person name="Shimokawa K."/>
            <person name="Bajic V.B."/>
            <person name="Brenner S.E."/>
            <person name="Batalov S."/>
            <person name="Forrest A.R."/>
            <person name="Zavolan M."/>
            <person name="Davis M.J."/>
            <person name="Wilming L.G."/>
            <person name="Aidinis V."/>
            <person name="Allen J.E."/>
            <person name="Ambesi-Impiombato A."/>
            <person name="Apweiler R."/>
            <person name="Aturaliya R.N."/>
            <person name="Bailey T.L."/>
            <person name="Bansal M."/>
            <person name="Baxter L."/>
            <person name="Beisel K.W."/>
            <person name="Bersano T."/>
            <person name="Bono H."/>
            <person name="Chalk A.M."/>
            <person name="Chiu K.P."/>
            <person name="Choudhary V."/>
            <person name="Christoffels A."/>
            <person name="Clutterbuck D.R."/>
            <person name="Crowe M.L."/>
            <person name="Dalla E."/>
            <person name="Dalrymple B.P."/>
            <person name="de Bono B."/>
            <person name="Della Gatta G."/>
            <person name="di Bernardo D."/>
            <person name="Down T."/>
            <person name="Engstrom P."/>
            <person name="Fagiolini M."/>
            <person name="Faulkner G."/>
            <person name="Fletcher C.F."/>
            <person name="Fukushima T."/>
            <person name="Furuno M."/>
            <person name="Futaki S."/>
            <person name="Gariboldi M."/>
            <person name="Georgii-Hemming P."/>
            <person name="Gingeras T.R."/>
            <person name="Gojobori T."/>
            <person name="Green R.E."/>
            <person name="Gustincich S."/>
            <person name="Harbers M."/>
            <person name="Hayashi Y."/>
            <person name="Hensch T.K."/>
            <person name="Hirokawa N."/>
            <person name="Hill D."/>
            <person name="Huminiecki L."/>
            <person name="Iacono M."/>
            <person name="Ikeo K."/>
            <person name="Iwama A."/>
            <person name="Ishikawa T."/>
            <person name="Jakt M."/>
            <person name="Kanapin A."/>
            <person name="Katoh M."/>
            <person name="Kawasawa Y."/>
            <person name="Kelso J."/>
            <person name="Kitamura H."/>
            <person name="Kitano H."/>
            <person name="Kollias G."/>
            <person name="Krishnan S.P."/>
            <person name="Kruger A."/>
            <person name="Kummerfeld S.K."/>
            <person name="Kurochkin I.V."/>
            <person name="Lareau L.F."/>
            <person name="Lazarevic D."/>
            <person name="Lipovich L."/>
            <person name="Liu J."/>
            <person name="Liuni S."/>
            <person name="McWilliam S."/>
            <person name="Madan Babu M."/>
            <person name="Madera M."/>
            <person name="Marchionni L."/>
            <person name="Matsuda H."/>
            <person name="Matsuzawa S."/>
            <person name="Miki H."/>
            <person name="Mignone F."/>
            <person name="Miyake S."/>
            <person name="Morris K."/>
            <person name="Mottagui-Tabar S."/>
            <person name="Mulder N."/>
            <person name="Nakano N."/>
            <person name="Nakauchi H."/>
            <person name="Ng P."/>
            <person name="Nilsson R."/>
            <person name="Nishiguchi S."/>
            <person name="Nishikawa S."/>
            <person name="Nori F."/>
            <person name="Ohara O."/>
            <person name="Okazaki Y."/>
            <person name="Orlando V."/>
            <person name="Pang K.C."/>
            <person name="Pavan W.J."/>
            <person name="Pavesi G."/>
            <person name="Pesole G."/>
            <person name="Petrovsky N."/>
            <person name="Piazza S."/>
            <person name="Reed J."/>
            <person name="Reid J.F."/>
            <person name="Ring B.Z."/>
            <person name="Ringwald M."/>
            <person name="Rost B."/>
            <person name="Ruan Y."/>
            <person name="Salzberg S.L."/>
            <person name="Sandelin A."/>
            <person name="Schneider C."/>
            <person name="Schoenbach C."/>
            <person name="Sekiguchi K."/>
            <person name="Semple C.A."/>
            <person name="Seno S."/>
            <person name="Sessa L."/>
            <person name="Sheng Y."/>
            <person name="Shibata Y."/>
            <person name="Shimada H."/>
            <person name="Shimada K."/>
            <person name="Silva D."/>
            <person name="Sinclair B."/>
            <person name="Sperling S."/>
            <person name="Stupka E."/>
            <person name="Sugiura K."/>
            <person name="Sultana R."/>
            <person name="Takenaka Y."/>
            <person name="Taki K."/>
            <person name="Tammoja K."/>
            <person name="Tan S.L."/>
            <person name="Tang S."/>
            <person name="Taylor M.S."/>
            <person name="Tegner J."/>
            <person name="Teichmann S.A."/>
            <person name="Ueda H.R."/>
            <person name="van Nimwegen E."/>
            <person name="Verardo R."/>
            <person name="Wei C.L."/>
            <person name="Yagi K."/>
            <person name="Yamanishi H."/>
            <person name="Zabarovsky E."/>
            <person name="Zhu S."/>
            <person name="Zimmer A."/>
            <person name="Hide W."/>
            <person name="Bult C."/>
            <person name="Grimmond S.M."/>
            <person name="Teasdale R.D."/>
            <person name="Liu E.T."/>
            <person name="Brusic V."/>
            <person name="Quackenbush J."/>
            <person name="Wahlestedt C."/>
            <person name="Mattick J.S."/>
            <person name="Hume D.A."/>
            <person name="Kai C."/>
            <person name="Sasaki D."/>
            <person name="Tomaru Y."/>
            <person name="Fukuda S."/>
            <person name="Kanamori-Katayama M."/>
            <person name="Suzuki M."/>
            <person name="Aoki J."/>
            <person name="Arakawa T."/>
            <person name="Iida J."/>
            <person name="Imamura K."/>
            <person name="Itoh M."/>
            <person name="Kato T."/>
            <person name="Kawaji H."/>
            <person name="Kawagashira N."/>
            <person name="Kawashima T."/>
            <person name="Kojima M."/>
            <person name="Kondo S."/>
            <person name="Konno H."/>
            <person name="Nakano K."/>
            <person name="Ninomiya N."/>
            <person name="Nishio T."/>
            <person name="Okada M."/>
            <person name="Plessy C."/>
            <person name="Shibata K."/>
            <person name="Shiraki T."/>
            <person name="Suzuki S."/>
            <person name="Tagami M."/>
            <person name="Waki K."/>
            <person name="Watahiki A."/>
            <person name="Okamura-Oho Y."/>
            <person name="Suzuki H."/>
            <person name="Kawai J."/>
            <person name="Hayashizaki Y."/>
        </authorList>
    </citation>
    <scope>NUCLEOTIDE SEQUENCE [LARGE SCALE MRNA]</scope>
    <source>
        <strain evidence="4">C57BL/6J</strain>
        <tissue evidence="4">Head</tissue>
    </source>
</reference>
<proteinExistence type="evidence at transcript level"/>
<name>KRA52_MOUSE</name>
<accession>Q9D5Z7</accession>
<comment type="function">
    <text evidence="3">In the hair cortex, hair keratin intermediate filaments are embedded in an interfilamentous matrix, consisting of hair keratin-associated protein (KRTAP), which are essential for the formation of a rigid and resistant hair shaft through their extensive disulfide bond cross-linking with abundant cysteine residues of hair keratins. The matrix proteins include the high-sulfur and high-glycine-tyrosine keratins.</text>
</comment>
<comment type="subunit">
    <text evidence="3">Interacts with hair keratins.</text>
</comment>
<comment type="similarity">
    <text evidence="1">Belongs to the KRTAP type 5 family.</text>
</comment>
<dbReference type="EMBL" id="AK014785">
    <property type="protein sequence ID" value="BAB29552.1"/>
    <property type="molecule type" value="mRNA"/>
</dbReference>
<dbReference type="RefSeq" id="NP_082120.3">
    <property type="nucleotide sequence ID" value="NM_027844.4"/>
</dbReference>
<dbReference type="STRING" id="10090.ENSMUSP00000140784"/>
<dbReference type="PhosphoSitePlus" id="Q9D5Z7"/>
<dbReference type="PaxDb" id="10090-ENSMUSP00000140784"/>
<dbReference type="DNASU" id="71623"/>
<dbReference type="GeneID" id="71623"/>
<dbReference type="KEGG" id="mmu:71623"/>
<dbReference type="AGR" id="MGI:1918873"/>
<dbReference type="CTD" id="440021"/>
<dbReference type="MGI" id="MGI:1918873">
    <property type="gene designation" value="Krtap5-2"/>
</dbReference>
<dbReference type="InParanoid" id="Q9D5Z7"/>
<dbReference type="Reactome" id="R-MMU-6805567">
    <property type="pathway name" value="Keratinization"/>
</dbReference>
<dbReference type="BioGRID-ORCS" id="71623">
    <property type="hits" value="7 hits in 50 CRISPR screens"/>
</dbReference>
<dbReference type="PRO" id="PR:Q9D5Z7"/>
<dbReference type="Proteomes" id="UP000000589">
    <property type="component" value="Unplaced"/>
</dbReference>
<dbReference type="RNAct" id="Q9D5Z7">
    <property type="molecule type" value="protein"/>
</dbReference>
<dbReference type="GO" id="GO:0005882">
    <property type="term" value="C:intermediate filament"/>
    <property type="evidence" value="ECO:0007669"/>
    <property type="project" value="UniProtKB-KW"/>
</dbReference>
<keyword id="KW-0416">Keratin</keyword>
<keyword id="KW-1185">Reference proteome</keyword>
<keyword id="KW-0677">Repeat</keyword>
<organism>
    <name type="scientific">Mus musculus</name>
    <name type="common">Mouse</name>
    <dbReference type="NCBI Taxonomy" id="10090"/>
    <lineage>
        <taxon>Eukaryota</taxon>
        <taxon>Metazoa</taxon>
        <taxon>Chordata</taxon>
        <taxon>Craniata</taxon>
        <taxon>Vertebrata</taxon>
        <taxon>Euteleostomi</taxon>
        <taxon>Mammalia</taxon>
        <taxon>Eutheria</taxon>
        <taxon>Euarchontoglires</taxon>
        <taxon>Glires</taxon>
        <taxon>Rodentia</taxon>
        <taxon>Myomorpha</taxon>
        <taxon>Muroidea</taxon>
        <taxon>Muridae</taxon>
        <taxon>Murinae</taxon>
        <taxon>Mus</taxon>
        <taxon>Mus</taxon>
    </lineage>
</organism>
<feature type="chain" id="PRO_0000361658" description="Keratin-associated protein 5-2">
    <location>
        <begin position="1"/>
        <end position="189"/>
    </location>
</feature>
<feature type="repeat" description="1" evidence="2">
    <location>
        <begin position="21"/>
        <end position="24"/>
    </location>
</feature>
<feature type="repeat" description="2" evidence="2">
    <location>
        <begin position="27"/>
        <end position="30"/>
    </location>
</feature>
<feature type="repeat" description="3" evidence="2">
    <location>
        <begin position="33"/>
        <end position="36"/>
    </location>
</feature>
<feature type="repeat" description="4" evidence="2">
    <location>
        <begin position="134"/>
        <end position="137"/>
    </location>
</feature>
<feature type="repeat" description="5" evidence="2">
    <location>
        <begin position="144"/>
        <end position="147"/>
    </location>
</feature>
<feature type="repeat" description="6" evidence="2">
    <location>
        <begin position="159"/>
        <end position="162"/>
    </location>
</feature>
<feature type="repeat" description="7" evidence="2">
    <location>
        <begin position="169"/>
        <end position="172"/>
    </location>
</feature>
<feature type="repeat" description="8" evidence="2">
    <location>
        <begin position="179"/>
        <end position="182"/>
    </location>
</feature>
<feature type="region of interest" description="8 X 4 AA repeats of C-C-X-P" evidence="2">
    <location>
        <begin position="27"/>
        <end position="182"/>
    </location>
</feature>